<proteinExistence type="inferred from homology"/>
<organism>
    <name type="scientific">Acidithiobacillus ferrooxidans (strain ATCC 53993 / BNL-5-31)</name>
    <name type="common">Leptospirillum ferrooxidans (ATCC 53993)</name>
    <dbReference type="NCBI Taxonomy" id="380394"/>
    <lineage>
        <taxon>Bacteria</taxon>
        <taxon>Pseudomonadati</taxon>
        <taxon>Pseudomonadota</taxon>
        <taxon>Acidithiobacillia</taxon>
        <taxon>Acidithiobacillales</taxon>
        <taxon>Acidithiobacillaceae</taxon>
        <taxon>Acidithiobacillus</taxon>
    </lineage>
</organism>
<protein>
    <recommendedName>
        <fullName evidence="1">1-deoxy-D-xylulose 5-phosphate reductoisomerase</fullName>
        <shortName evidence="1">DXP reductoisomerase</shortName>
        <ecNumber evidence="1">1.1.1.267</ecNumber>
    </recommendedName>
    <alternativeName>
        <fullName evidence="1">1-deoxyxylulose-5-phosphate reductoisomerase</fullName>
    </alternativeName>
    <alternativeName>
        <fullName evidence="1">2-C-methyl-D-erythritol 4-phosphate synthase</fullName>
    </alternativeName>
</protein>
<sequence>MTRGICILGATGSIGKSTLDVVSRHPDQFRIVALTGNHRVAEMQLLCQQHHPELVVMAAPEAAQQLRVGLGDAGLKKIQVESGPEALAEAARMSGVDEVMAAIVGAAGLLPTLAAVEAGKKVYLANKECLVMAGNLFMERVRQHQVTLLPIDSEHNAVFQCFADGKGVRRILLTASGGPFRTWPAEHLAVVTPDQACAHPNWVMGRKISVDSATMMNKGLEVIEAHWLFDLPASRIDVMIHPQSIIHSMVEYVDGSVLAQLGNPDMRTPIAHALAFPERMESGVSSLDLAHGPDLQFEAPDLQRFPCLALAFDALQAGGAAATVLNAANEIAVQAFLEGHLPFLRIAAVVEDTLGELQPAAPDHLDDVLAIDQLAREVALRHLARHGSGMQ</sequence>
<name>DXR_ACIF5</name>
<reference key="1">
    <citation type="submission" date="2008-08" db="EMBL/GenBank/DDBJ databases">
        <title>Complete sequence of Acidithiobacillus ferrooxidans ATCC 53993.</title>
        <authorList>
            <person name="Lucas S."/>
            <person name="Copeland A."/>
            <person name="Lapidus A."/>
            <person name="Glavina del Rio T."/>
            <person name="Dalin E."/>
            <person name="Tice H."/>
            <person name="Bruce D."/>
            <person name="Goodwin L."/>
            <person name="Pitluck S."/>
            <person name="Sims D."/>
            <person name="Brettin T."/>
            <person name="Detter J.C."/>
            <person name="Han C."/>
            <person name="Kuske C.R."/>
            <person name="Larimer F."/>
            <person name="Land M."/>
            <person name="Hauser L."/>
            <person name="Kyrpides N."/>
            <person name="Lykidis A."/>
            <person name="Borole A.P."/>
        </authorList>
    </citation>
    <scope>NUCLEOTIDE SEQUENCE [LARGE SCALE GENOMIC DNA]</scope>
    <source>
        <strain>ATCC 53993 / BNL-5-31</strain>
    </source>
</reference>
<accession>B5EQQ4</accession>
<feature type="chain" id="PRO_1000203881" description="1-deoxy-D-xylulose 5-phosphate reductoisomerase">
    <location>
        <begin position="1"/>
        <end position="391"/>
    </location>
</feature>
<feature type="binding site" evidence="1">
    <location>
        <position position="11"/>
    </location>
    <ligand>
        <name>NADPH</name>
        <dbReference type="ChEBI" id="CHEBI:57783"/>
    </ligand>
</feature>
<feature type="binding site" evidence="1">
    <location>
        <position position="12"/>
    </location>
    <ligand>
        <name>NADPH</name>
        <dbReference type="ChEBI" id="CHEBI:57783"/>
    </ligand>
</feature>
<feature type="binding site" evidence="1">
    <location>
        <position position="13"/>
    </location>
    <ligand>
        <name>NADPH</name>
        <dbReference type="ChEBI" id="CHEBI:57783"/>
    </ligand>
</feature>
<feature type="binding site" evidence="1">
    <location>
        <position position="14"/>
    </location>
    <ligand>
        <name>NADPH</name>
        <dbReference type="ChEBI" id="CHEBI:57783"/>
    </ligand>
</feature>
<feature type="binding site" evidence="1">
    <location>
        <position position="126"/>
    </location>
    <ligand>
        <name>NADPH</name>
        <dbReference type="ChEBI" id="CHEBI:57783"/>
    </ligand>
</feature>
<feature type="binding site" evidence="1">
    <location>
        <position position="127"/>
    </location>
    <ligand>
        <name>1-deoxy-D-xylulose 5-phosphate</name>
        <dbReference type="ChEBI" id="CHEBI:57792"/>
    </ligand>
</feature>
<feature type="binding site" evidence="1">
    <location>
        <position position="128"/>
    </location>
    <ligand>
        <name>NADPH</name>
        <dbReference type="ChEBI" id="CHEBI:57783"/>
    </ligand>
</feature>
<feature type="binding site" evidence="1">
    <location>
        <position position="152"/>
    </location>
    <ligand>
        <name>Mn(2+)</name>
        <dbReference type="ChEBI" id="CHEBI:29035"/>
    </ligand>
</feature>
<feature type="binding site" evidence="1">
    <location>
        <position position="153"/>
    </location>
    <ligand>
        <name>1-deoxy-D-xylulose 5-phosphate</name>
        <dbReference type="ChEBI" id="CHEBI:57792"/>
    </ligand>
</feature>
<feature type="binding site" evidence="1">
    <location>
        <position position="154"/>
    </location>
    <ligand>
        <name>1-deoxy-D-xylulose 5-phosphate</name>
        <dbReference type="ChEBI" id="CHEBI:57792"/>
    </ligand>
</feature>
<feature type="binding site" evidence="1">
    <location>
        <position position="154"/>
    </location>
    <ligand>
        <name>Mn(2+)</name>
        <dbReference type="ChEBI" id="CHEBI:29035"/>
    </ligand>
</feature>
<feature type="binding site" evidence="1">
    <location>
        <position position="176"/>
    </location>
    <ligand>
        <name>1-deoxy-D-xylulose 5-phosphate</name>
        <dbReference type="ChEBI" id="CHEBI:57792"/>
    </ligand>
</feature>
<feature type="binding site" evidence="1">
    <location>
        <position position="199"/>
    </location>
    <ligand>
        <name>1-deoxy-D-xylulose 5-phosphate</name>
        <dbReference type="ChEBI" id="CHEBI:57792"/>
    </ligand>
</feature>
<feature type="binding site" evidence="1">
    <location>
        <position position="205"/>
    </location>
    <ligand>
        <name>NADPH</name>
        <dbReference type="ChEBI" id="CHEBI:57783"/>
    </ligand>
</feature>
<feature type="binding site" evidence="1">
    <location>
        <position position="212"/>
    </location>
    <ligand>
        <name>1-deoxy-D-xylulose 5-phosphate</name>
        <dbReference type="ChEBI" id="CHEBI:57792"/>
    </ligand>
</feature>
<feature type="binding site" evidence="1">
    <location>
        <position position="217"/>
    </location>
    <ligand>
        <name>1-deoxy-D-xylulose 5-phosphate</name>
        <dbReference type="ChEBI" id="CHEBI:57792"/>
    </ligand>
</feature>
<feature type="binding site" evidence="1">
    <location>
        <position position="218"/>
    </location>
    <ligand>
        <name>1-deoxy-D-xylulose 5-phosphate</name>
        <dbReference type="ChEBI" id="CHEBI:57792"/>
    </ligand>
</feature>
<feature type="binding site" evidence="1">
    <location>
        <position position="221"/>
    </location>
    <ligand>
        <name>1-deoxy-D-xylulose 5-phosphate</name>
        <dbReference type="ChEBI" id="CHEBI:57792"/>
    </ligand>
</feature>
<feature type="binding site" evidence="1">
    <location>
        <position position="221"/>
    </location>
    <ligand>
        <name>Mn(2+)</name>
        <dbReference type="ChEBI" id="CHEBI:29035"/>
    </ligand>
</feature>
<comment type="function">
    <text evidence="1">Catalyzes the NADPH-dependent rearrangement and reduction of 1-deoxy-D-xylulose-5-phosphate (DXP) to 2-C-methyl-D-erythritol 4-phosphate (MEP).</text>
</comment>
<comment type="catalytic activity">
    <reaction evidence="1">
        <text>2-C-methyl-D-erythritol 4-phosphate + NADP(+) = 1-deoxy-D-xylulose 5-phosphate + NADPH + H(+)</text>
        <dbReference type="Rhea" id="RHEA:13717"/>
        <dbReference type="ChEBI" id="CHEBI:15378"/>
        <dbReference type="ChEBI" id="CHEBI:57783"/>
        <dbReference type="ChEBI" id="CHEBI:57792"/>
        <dbReference type="ChEBI" id="CHEBI:58262"/>
        <dbReference type="ChEBI" id="CHEBI:58349"/>
        <dbReference type="EC" id="1.1.1.267"/>
    </reaction>
    <physiologicalReaction direction="right-to-left" evidence="1">
        <dbReference type="Rhea" id="RHEA:13719"/>
    </physiologicalReaction>
</comment>
<comment type="cofactor">
    <cofactor evidence="1">
        <name>Mg(2+)</name>
        <dbReference type="ChEBI" id="CHEBI:18420"/>
    </cofactor>
    <cofactor evidence="1">
        <name>Mn(2+)</name>
        <dbReference type="ChEBI" id="CHEBI:29035"/>
    </cofactor>
</comment>
<comment type="pathway">
    <text evidence="1">Isoprenoid biosynthesis; isopentenyl diphosphate biosynthesis via DXP pathway; isopentenyl diphosphate from 1-deoxy-D-xylulose 5-phosphate: step 1/6.</text>
</comment>
<comment type="similarity">
    <text evidence="1">Belongs to the DXR family.</text>
</comment>
<evidence type="ECO:0000255" key="1">
    <source>
        <dbReference type="HAMAP-Rule" id="MF_00183"/>
    </source>
</evidence>
<keyword id="KW-0414">Isoprene biosynthesis</keyword>
<keyword id="KW-0464">Manganese</keyword>
<keyword id="KW-0479">Metal-binding</keyword>
<keyword id="KW-0521">NADP</keyword>
<keyword id="KW-0560">Oxidoreductase</keyword>
<dbReference type="EC" id="1.1.1.267" evidence="1"/>
<dbReference type="EMBL" id="CP001132">
    <property type="protein sequence ID" value="ACH83404.1"/>
    <property type="molecule type" value="Genomic_DNA"/>
</dbReference>
<dbReference type="SMR" id="B5EQQ4"/>
<dbReference type="KEGG" id="afe:Lferr_1166"/>
<dbReference type="eggNOG" id="COG0743">
    <property type="taxonomic scope" value="Bacteria"/>
</dbReference>
<dbReference type="HOGENOM" id="CLU_035714_4_0_6"/>
<dbReference type="UniPathway" id="UPA00056">
    <property type="reaction ID" value="UER00092"/>
</dbReference>
<dbReference type="GO" id="GO:0030604">
    <property type="term" value="F:1-deoxy-D-xylulose-5-phosphate reductoisomerase activity"/>
    <property type="evidence" value="ECO:0007669"/>
    <property type="project" value="UniProtKB-UniRule"/>
</dbReference>
<dbReference type="GO" id="GO:0030145">
    <property type="term" value="F:manganese ion binding"/>
    <property type="evidence" value="ECO:0007669"/>
    <property type="project" value="TreeGrafter"/>
</dbReference>
<dbReference type="GO" id="GO:0070402">
    <property type="term" value="F:NADPH binding"/>
    <property type="evidence" value="ECO:0007669"/>
    <property type="project" value="InterPro"/>
</dbReference>
<dbReference type="GO" id="GO:0051484">
    <property type="term" value="P:isopentenyl diphosphate biosynthetic process, methylerythritol 4-phosphate pathway involved in terpenoid biosynthetic process"/>
    <property type="evidence" value="ECO:0007669"/>
    <property type="project" value="TreeGrafter"/>
</dbReference>
<dbReference type="FunFam" id="3.40.50.720:FF:000045">
    <property type="entry name" value="1-deoxy-D-xylulose 5-phosphate reductoisomerase"/>
    <property type="match status" value="1"/>
</dbReference>
<dbReference type="Gene3D" id="1.10.1740.10">
    <property type="match status" value="1"/>
</dbReference>
<dbReference type="Gene3D" id="3.40.50.720">
    <property type="entry name" value="NAD(P)-binding Rossmann-like Domain"/>
    <property type="match status" value="1"/>
</dbReference>
<dbReference type="HAMAP" id="MF_00183">
    <property type="entry name" value="DXP_reductoisom"/>
    <property type="match status" value="1"/>
</dbReference>
<dbReference type="InterPro" id="IPR003821">
    <property type="entry name" value="DXP_reductoisomerase"/>
</dbReference>
<dbReference type="InterPro" id="IPR013644">
    <property type="entry name" value="DXP_reductoisomerase_C"/>
</dbReference>
<dbReference type="InterPro" id="IPR013512">
    <property type="entry name" value="DXP_reductoisomerase_N"/>
</dbReference>
<dbReference type="InterPro" id="IPR026877">
    <property type="entry name" value="DXPR_C"/>
</dbReference>
<dbReference type="InterPro" id="IPR036169">
    <property type="entry name" value="DXPR_C_sf"/>
</dbReference>
<dbReference type="InterPro" id="IPR036291">
    <property type="entry name" value="NAD(P)-bd_dom_sf"/>
</dbReference>
<dbReference type="NCBIfam" id="TIGR00243">
    <property type="entry name" value="Dxr"/>
    <property type="match status" value="1"/>
</dbReference>
<dbReference type="NCBIfam" id="NF003938">
    <property type="entry name" value="PRK05447.1-1"/>
    <property type="match status" value="1"/>
</dbReference>
<dbReference type="NCBIfam" id="NF009114">
    <property type="entry name" value="PRK12464.1"/>
    <property type="match status" value="1"/>
</dbReference>
<dbReference type="PANTHER" id="PTHR30525">
    <property type="entry name" value="1-DEOXY-D-XYLULOSE 5-PHOSPHATE REDUCTOISOMERASE"/>
    <property type="match status" value="1"/>
</dbReference>
<dbReference type="PANTHER" id="PTHR30525:SF0">
    <property type="entry name" value="1-DEOXY-D-XYLULOSE 5-PHOSPHATE REDUCTOISOMERASE, CHLOROPLASTIC"/>
    <property type="match status" value="1"/>
</dbReference>
<dbReference type="Pfam" id="PF08436">
    <property type="entry name" value="DXP_redisom_C"/>
    <property type="match status" value="1"/>
</dbReference>
<dbReference type="Pfam" id="PF02670">
    <property type="entry name" value="DXP_reductoisom"/>
    <property type="match status" value="1"/>
</dbReference>
<dbReference type="Pfam" id="PF13288">
    <property type="entry name" value="DXPR_C"/>
    <property type="match status" value="1"/>
</dbReference>
<dbReference type="PIRSF" id="PIRSF006205">
    <property type="entry name" value="Dxp_reductismrs"/>
    <property type="match status" value="1"/>
</dbReference>
<dbReference type="SUPFAM" id="SSF69055">
    <property type="entry name" value="1-deoxy-D-xylulose-5-phosphate reductoisomerase, C-terminal domain"/>
    <property type="match status" value="1"/>
</dbReference>
<dbReference type="SUPFAM" id="SSF55347">
    <property type="entry name" value="Glyceraldehyde-3-phosphate dehydrogenase-like, C-terminal domain"/>
    <property type="match status" value="1"/>
</dbReference>
<dbReference type="SUPFAM" id="SSF51735">
    <property type="entry name" value="NAD(P)-binding Rossmann-fold domains"/>
    <property type="match status" value="1"/>
</dbReference>
<gene>
    <name evidence="1" type="primary">dxr</name>
    <name type="ordered locus">Lferr_1166</name>
</gene>